<sequence length="488" mass="54773">MQYRDLRDFIRGLEQRGELKRIQVPISPVLEMTEVCDRTLRAKGPALLFEKPTGFDIPVLGNLFGTPERVAMGMGAESVDELREIGKLLAFLKEPEPPKGLKDAWSKLPIFKKVVSMAPKVVKDAVCQEVVVEGDDVDLGALPIQHCWPGDVAPLITWGLTVTRGPNKDRQNLGIYRQQVIGRNKVIMRWLSHRGGALDYREWCEKNPGQPFPVAVALGADPATILGAVTPVPDTLSEYAFAGLLRGNRTELVKCRGSNLQVPATAEIILEGVIHPGEMAPEGPYGDHTGYYNEVDSFPVFTVERITHRHKPIYHSTYTGRPPDEPAILGVALNEVFVPILQKQFPEITDFYLPPEGCSYRMAVVTMKKQYPGHAKRVMLGVWSFLRQFMYTKFVIVTDDDINARDWNDVIWAITTRMDPKRDTVMIDNTPIDYLDFASPVSGLGSKMGLDATHKWPGETTREWGRVIVKDEAVTRRIDELWDQLGID</sequence>
<comment type="function">
    <text evidence="1">Catalyzes the decarboxylation of 3-octaprenyl-4-hydroxy benzoate to 2-octaprenylphenol, an intermediate step in ubiquinone biosynthesis.</text>
</comment>
<comment type="catalytic activity">
    <reaction evidence="1">
        <text>a 4-hydroxy-3-(all-trans-polyprenyl)benzoate + H(+) = a 2-(all-trans-polyprenyl)phenol + CO2</text>
        <dbReference type="Rhea" id="RHEA:41680"/>
        <dbReference type="Rhea" id="RHEA-COMP:9514"/>
        <dbReference type="Rhea" id="RHEA-COMP:9516"/>
        <dbReference type="ChEBI" id="CHEBI:1269"/>
        <dbReference type="ChEBI" id="CHEBI:15378"/>
        <dbReference type="ChEBI" id="CHEBI:16526"/>
        <dbReference type="ChEBI" id="CHEBI:78396"/>
        <dbReference type="EC" id="4.1.1.98"/>
    </reaction>
</comment>
<comment type="cofactor">
    <cofactor evidence="1">
        <name>prenylated FMN</name>
        <dbReference type="ChEBI" id="CHEBI:87746"/>
    </cofactor>
    <text evidence="1">Binds 1 prenylated FMN per subunit.</text>
</comment>
<comment type="cofactor">
    <cofactor evidence="1">
        <name>Mn(2+)</name>
        <dbReference type="ChEBI" id="CHEBI:29035"/>
    </cofactor>
</comment>
<comment type="pathway">
    <text evidence="1">Cofactor biosynthesis; ubiquinone biosynthesis.</text>
</comment>
<comment type="subunit">
    <text evidence="1">Homohexamer.</text>
</comment>
<comment type="subcellular location">
    <subcellularLocation>
        <location evidence="1">Cell membrane</location>
        <topology evidence="1">Peripheral membrane protein</topology>
    </subcellularLocation>
</comment>
<comment type="similarity">
    <text evidence="1">Belongs to the UbiD family.</text>
</comment>
<proteinExistence type="inferred from homology"/>
<accession>B0KP99</accession>
<name>UBID_PSEPG</name>
<organism>
    <name type="scientific">Pseudomonas putida (strain GB-1)</name>
    <dbReference type="NCBI Taxonomy" id="76869"/>
    <lineage>
        <taxon>Bacteria</taxon>
        <taxon>Pseudomonadati</taxon>
        <taxon>Pseudomonadota</taxon>
        <taxon>Gammaproteobacteria</taxon>
        <taxon>Pseudomonadales</taxon>
        <taxon>Pseudomonadaceae</taxon>
        <taxon>Pseudomonas</taxon>
    </lineage>
</organism>
<reference key="1">
    <citation type="submission" date="2008-01" db="EMBL/GenBank/DDBJ databases">
        <title>Complete sequence of Pseudomonas putida GB-1.</title>
        <authorList>
            <consortium name="US DOE Joint Genome Institute"/>
            <person name="Copeland A."/>
            <person name="Lucas S."/>
            <person name="Lapidus A."/>
            <person name="Barry K."/>
            <person name="Glavina del Rio T."/>
            <person name="Dalin E."/>
            <person name="Tice H."/>
            <person name="Pitluck S."/>
            <person name="Bruce D."/>
            <person name="Goodwin L."/>
            <person name="Chertkov O."/>
            <person name="Brettin T."/>
            <person name="Detter J.C."/>
            <person name="Han C."/>
            <person name="Kuske C.R."/>
            <person name="Schmutz J."/>
            <person name="Larimer F."/>
            <person name="Land M."/>
            <person name="Hauser L."/>
            <person name="Kyrpides N."/>
            <person name="Kim E."/>
            <person name="McCarthy J.K."/>
            <person name="Richardson P."/>
        </authorList>
    </citation>
    <scope>NUCLEOTIDE SEQUENCE [LARGE SCALE GENOMIC DNA]</scope>
    <source>
        <strain>GB-1</strain>
    </source>
</reference>
<gene>
    <name evidence="1" type="primary">ubiD</name>
    <name type="ordered locus">PputGB1_5274</name>
</gene>
<evidence type="ECO:0000255" key="1">
    <source>
        <dbReference type="HAMAP-Rule" id="MF_01636"/>
    </source>
</evidence>
<protein>
    <recommendedName>
        <fullName evidence="1">3-octaprenyl-4-hydroxybenzoate carboxy-lyase</fullName>
        <ecNumber evidence="1">4.1.1.98</ecNumber>
    </recommendedName>
    <alternativeName>
        <fullName evidence="1">Polyprenyl p-hydroxybenzoate decarboxylase</fullName>
    </alternativeName>
</protein>
<keyword id="KW-1003">Cell membrane</keyword>
<keyword id="KW-0210">Decarboxylase</keyword>
<keyword id="KW-0285">Flavoprotein</keyword>
<keyword id="KW-0288">FMN</keyword>
<keyword id="KW-0456">Lyase</keyword>
<keyword id="KW-0464">Manganese</keyword>
<keyword id="KW-0472">Membrane</keyword>
<keyword id="KW-0479">Metal-binding</keyword>
<keyword id="KW-0831">Ubiquinone biosynthesis</keyword>
<dbReference type="EC" id="4.1.1.98" evidence="1"/>
<dbReference type="EMBL" id="CP000926">
    <property type="protein sequence ID" value="ABZ01157.1"/>
    <property type="molecule type" value="Genomic_DNA"/>
</dbReference>
<dbReference type="RefSeq" id="WP_012274767.1">
    <property type="nucleotide sequence ID" value="NC_010322.1"/>
</dbReference>
<dbReference type="SMR" id="B0KP99"/>
<dbReference type="KEGG" id="ppg:PputGB1_5274"/>
<dbReference type="eggNOG" id="COG0043">
    <property type="taxonomic scope" value="Bacteria"/>
</dbReference>
<dbReference type="HOGENOM" id="CLU_023348_4_1_6"/>
<dbReference type="UniPathway" id="UPA00232"/>
<dbReference type="Proteomes" id="UP000002157">
    <property type="component" value="Chromosome"/>
</dbReference>
<dbReference type="GO" id="GO:0005829">
    <property type="term" value="C:cytosol"/>
    <property type="evidence" value="ECO:0007669"/>
    <property type="project" value="TreeGrafter"/>
</dbReference>
<dbReference type="GO" id="GO:0005886">
    <property type="term" value="C:plasma membrane"/>
    <property type="evidence" value="ECO:0007669"/>
    <property type="project" value="UniProtKB-SubCell"/>
</dbReference>
<dbReference type="GO" id="GO:0008694">
    <property type="term" value="F:3-octaprenyl-4-hydroxybenzoate carboxy-lyase activity"/>
    <property type="evidence" value="ECO:0007669"/>
    <property type="project" value="UniProtKB-UniRule"/>
</dbReference>
<dbReference type="GO" id="GO:0046872">
    <property type="term" value="F:metal ion binding"/>
    <property type="evidence" value="ECO:0007669"/>
    <property type="project" value="UniProtKB-KW"/>
</dbReference>
<dbReference type="GO" id="GO:0006744">
    <property type="term" value="P:ubiquinone biosynthetic process"/>
    <property type="evidence" value="ECO:0007669"/>
    <property type="project" value="UniProtKB-UniRule"/>
</dbReference>
<dbReference type="FunFam" id="1.20.5.570:FF:000001">
    <property type="entry name" value="3-octaprenyl-4-hydroxybenzoate carboxy-lyase"/>
    <property type="match status" value="1"/>
</dbReference>
<dbReference type="FunFam" id="3.40.1670.10:FF:000001">
    <property type="entry name" value="3-octaprenyl-4-hydroxybenzoate carboxy-lyase"/>
    <property type="match status" value="1"/>
</dbReference>
<dbReference type="Gene3D" id="1.20.5.570">
    <property type="entry name" value="Single helix bin"/>
    <property type="match status" value="1"/>
</dbReference>
<dbReference type="Gene3D" id="3.40.1670.10">
    <property type="entry name" value="UbiD C-terminal domain-like"/>
    <property type="match status" value="1"/>
</dbReference>
<dbReference type="HAMAP" id="MF_01636">
    <property type="entry name" value="UbiD"/>
    <property type="match status" value="1"/>
</dbReference>
<dbReference type="InterPro" id="IPR002830">
    <property type="entry name" value="UbiD"/>
</dbReference>
<dbReference type="InterPro" id="IPR049381">
    <property type="entry name" value="UbiD-like_C"/>
</dbReference>
<dbReference type="InterPro" id="IPR049383">
    <property type="entry name" value="UbiD-like_N"/>
</dbReference>
<dbReference type="InterPro" id="IPR023677">
    <property type="entry name" value="UbiD_bacteria"/>
</dbReference>
<dbReference type="InterPro" id="IPR048304">
    <property type="entry name" value="UbiD_Rift_dom"/>
</dbReference>
<dbReference type="NCBIfam" id="NF008175">
    <property type="entry name" value="PRK10922.1"/>
    <property type="match status" value="1"/>
</dbReference>
<dbReference type="NCBIfam" id="TIGR00148">
    <property type="entry name" value="UbiD family decarboxylase"/>
    <property type="match status" value="1"/>
</dbReference>
<dbReference type="PANTHER" id="PTHR30108">
    <property type="entry name" value="3-OCTAPRENYL-4-HYDROXYBENZOATE CARBOXY-LYASE-RELATED"/>
    <property type="match status" value="1"/>
</dbReference>
<dbReference type="PANTHER" id="PTHR30108:SF17">
    <property type="entry name" value="FERULIC ACID DECARBOXYLASE 1"/>
    <property type="match status" value="1"/>
</dbReference>
<dbReference type="Pfam" id="PF01977">
    <property type="entry name" value="UbiD"/>
    <property type="match status" value="1"/>
</dbReference>
<dbReference type="Pfam" id="PF20696">
    <property type="entry name" value="UbiD_C"/>
    <property type="match status" value="1"/>
</dbReference>
<dbReference type="Pfam" id="PF20695">
    <property type="entry name" value="UbiD_N"/>
    <property type="match status" value="1"/>
</dbReference>
<dbReference type="SUPFAM" id="SSF50475">
    <property type="entry name" value="FMN-binding split barrel"/>
    <property type="match status" value="1"/>
</dbReference>
<dbReference type="SUPFAM" id="SSF143968">
    <property type="entry name" value="UbiD C-terminal domain-like"/>
    <property type="match status" value="1"/>
</dbReference>
<feature type="chain" id="PRO_1000088190" description="3-octaprenyl-4-hydroxybenzoate carboxy-lyase">
    <location>
        <begin position="1"/>
        <end position="488"/>
    </location>
</feature>
<feature type="active site" description="Proton donor" evidence="1">
    <location>
        <position position="287"/>
    </location>
</feature>
<feature type="binding site" evidence="1">
    <location>
        <position position="172"/>
    </location>
    <ligand>
        <name>Mn(2+)</name>
        <dbReference type="ChEBI" id="CHEBI:29035"/>
    </ligand>
</feature>
<feature type="binding site" evidence="1">
    <location>
        <begin position="175"/>
        <end position="177"/>
    </location>
    <ligand>
        <name>prenylated FMN</name>
        <dbReference type="ChEBI" id="CHEBI:87746"/>
    </ligand>
</feature>
<feature type="binding site" evidence="1">
    <location>
        <begin position="189"/>
        <end position="191"/>
    </location>
    <ligand>
        <name>prenylated FMN</name>
        <dbReference type="ChEBI" id="CHEBI:87746"/>
    </ligand>
</feature>
<feature type="binding site" evidence="1">
    <location>
        <begin position="194"/>
        <end position="195"/>
    </location>
    <ligand>
        <name>prenylated FMN</name>
        <dbReference type="ChEBI" id="CHEBI:87746"/>
    </ligand>
</feature>
<feature type="binding site" evidence="1">
    <location>
        <position position="238"/>
    </location>
    <ligand>
        <name>Mn(2+)</name>
        <dbReference type="ChEBI" id="CHEBI:29035"/>
    </ligand>
</feature>